<feature type="chain" id="PRO_0000289514" description="GTP cyclohydrolase FolE2">
    <location>
        <begin position="1"/>
        <end position="267"/>
    </location>
</feature>
<feature type="site" description="May be catalytically important" evidence="1">
    <location>
        <position position="153"/>
    </location>
</feature>
<gene>
    <name evidence="1" type="primary">folE2</name>
    <name type="ordered locus">H16_A2731</name>
</gene>
<comment type="function">
    <text evidence="1">Converts GTP to 7,8-dihydroneopterin triphosphate.</text>
</comment>
<comment type="catalytic activity">
    <reaction evidence="1">
        <text>GTP + H2O = 7,8-dihydroneopterin 3'-triphosphate + formate + H(+)</text>
        <dbReference type="Rhea" id="RHEA:17473"/>
        <dbReference type="ChEBI" id="CHEBI:15377"/>
        <dbReference type="ChEBI" id="CHEBI:15378"/>
        <dbReference type="ChEBI" id="CHEBI:15740"/>
        <dbReference type="ChEBI" id="CHEBI:37565"/>
        <dbReference type="ChEBI" id="CHEBI:58462"/>
        <dbReference type="EC" id="3.5.4.16"/>
    </reaction>
</comment>
<comment type="pathway">
    <text evidence="1">Cofactor biosynthesis; 7,8-dihydroneopterin triphosphate biosynthesis; 7,8-dihydroneopterin triphosphate from GTP: step 1/1.</text>
</comment>
<comment type="similarity">
    <text evidence="1">Belongs to the GTP cyclohydrolase IV family.</text>
</comment>
<keyword id="KW-0378">Hydrolase</keyword>
<keyword id="KW-1185">Reference proteome</keyword>
<proteinExistence type="inferred from homology"/>
<sequence>MNDINPAFVMPDVQSSPDTRQIPIQRVGVKGVRYPVTLKTPAGIMPSVGTFNLDVHLPADQKGTHMSRFVALLEEERAPLELSSFRLMLDKMLEKLEAEAGRIEVTFPYFISKTAPVSGVESLLDYEVTLTGEVRDGAARVFLKALVPVTSLCPCSKKISQYGAHNQRSHITMNVELAGELPVEALVRMAEEEASCELWGLLKRPDEKFVTERAYENPKFVEDLVRDIAMRLNADDRIVAYVLEAENFESIHNHSAYAVIERDKRVD</sequence>
<evidence type="ECO:0000255" key="1">
    <source>
        <dbReference type="HAMAP-Rule" id="MF_01527"/>
    </source>
</evidence>
<organism>
    <name type="scientific">Cupriavidus necator (strain ATCC 17699 / DSM 428 / KCTC 22496 / NCIMB 10442 / H16 / Stanier 337)</name>
    <name type="common">Ralstonia eutropha</name>
    <dbReference type="NCBI Taxonomy" id="381666"/>
    <lineage>
        <taxon>Bacteria</taxon>
        <taxon>Pseudomonadati</taxon>
        <taxon>Pseudomonadota</taxon>
        <taxon>Betaproteobacteria</taxon>
        <taxon>Burkholderiales</taxon>
        <taxon>Burkholderiaceae</taxon>
        <taxon>Cupriavidus</taxon>
    </lineage>
</organism>
<protein>
    <recommendedName>
        <fullName evidence="1">GTP cyclohydrolase FolE2</fullName>
        <ecNumber evidence="1">3.5.4.16</ecNumber>
    </recommendedName>
</protein>
<reference key="1">
    <citation type="journal article" date="2006" name="Nat. Biotechnol.">
        <title>Genome sequence of the bioplastic-producing 'Knallgas' bacterium Ralstonia eutropha H16.</title>
        <authorList>
            <person name="Pohlmann A."/>
            <person name="Fricke W.F."/>
            <person name="Reinecke F."/>
            <person name="Kusian B."/>
            <person name="Liesegang H."/>
            <person name="Cramm R."/>
            <person name="Eitinger T."/>
            <person name="Ewering C."/>
            <person name="Poetter M."/>
            <person name="Schwartz E."/>
            <person name="Strittmatter A."/>
            <person name="Voss I."/>
            <person name="Gottschalk G."/>
            <person name="Steinbuechel A."/>
            <person name="Friedrich B."/>
            <person name="Bowien B."/>
        </authorList>
    </citation>
    <scope>NUCLEOTIDE SEQUENCE [LARGE SCALE GENOMIC DNA]</scope>
    <source>
        <strain>ATCC 17699 / DSM 428 / KCTC 22496 / NCIMB 10442 / H16 / Stanier 337</strain>
    </source>
</reference>
<name>GCH4_CUPNH</name>
<accession>Q0K861</accession>
<dbReference type="EC" id="3.5.4.16" evidence="1"/>
<dbReference type="EMBL" id="AM260479">
    <property type="protein sequence ID" value="CAJ93810.1"/>
    <property type="molecule type" value="Genomic_DNA"/>
</dbReference>
<dbReference type="RefSeq" id="WP_010813640.1">
    <property type="nucleotide sequence ID" value="NZ_CP039287.1"/>
</dbReference>
<dbReference type="SMR" id="Q0K861"/>
<dbReference type="STRING" id="381666.H16_A2731"/>
<dbReference type="KEGG" id="reh:H16_A2731"/>
<dbReference type="eggNOG" id="COG1469">
    <property type="taxonomic scope" value="Bacteria"/>
</dbReference>
<dbReference type="HOGENOM" id="CLU_062816_1_1_4"/>
<dbReference type="OrthoDB" id="9774824at2"/>
<dbReference type="UniPathway" id="UPA00848">
    <property type="reaction ID" value="UER00151"/>
</dbReference>
<dbReference type="Proteomes" id="UP000008210">
    <property type="component" value="Chromosome 1"/>
</dbReference>
<dbReference type="GO" id="GO:0003934">
    <property type="term" value="F:GTP cyclohydrolase I activity"/>
    <property type="evidence" value="ECO:0007669"/>
    <property type="project" value="UniProtKB-UniRule"/>
</dbReference>
<dbReference type="GO" id="GO:0046654">
    <property type="term" value="P:tetrahydrofolate biosynthetic process"/>
    <property type="evidence" value="ECO:0007669"/>
    <property type="project" value="UniProtKB-UniRule"/>
</dbReference>
<dbReference type="Gene3D" id="3.10.270.10">
    <property type="entry name" value="Urate Oxidase"/>
    <property type="match status" value="1"/>
</dbReference>
<dbReference type="HAMAP" id="MF_01527_B">
    <property type="entry name" value="GTP_cyclohydrol_B"/>
    <property type="match status" value="1"/>
</dbReference>
<dbReference type="InterPro" id="IPR022838">
    <property type="entry name" value="GTP_cyclohydrolase_FolE2"/>
</dbReference>
<dbReference type="InterPro" id="IPR003801">
    <property type="entry name" value="GTP_cyclohydrolase_FolE2/MptA"/>
</dbReference>
<dbReference type="NCBIfam" id="NF010200">
    <property type="entry name" value="PRK13674.1-1"/>
    <property type="match status" value="1"/>
</dbReference>
<dbReference type="PANTHER" id="PTHR36445">
    <property type="entry name" value="GTP CYCLOHYDROLASE MPTA"/>
    <property type="match status" value="1"/>
</dbReference>
<dbReference type="PANTHER" id="PTHR36445:SF1">
    <property type="entry name" value="GTP CYCLOHYDROLASE MPTA"/>
    <property type="match status" value="1"/>
</dbReference>
<dbReference type="Pfam" id="PF02649">
    <property type="entry name" value="GCHY-1"/>
    <property type="match status" value="1"/>
</dbReference>